<accession>Q96K49</accession>
<accession>A8K2M9</accession>
<accession>Q1RLN2</accession>
<accession>Q53R54</accession>
<gene>
    <name evidence="7" type="primary">TMEM87B</name>
</gene>
<keyword id="KW-0025">Alternative splicing</keyword>
<keyword id="KW-0325">Glycoprotein</keyword>
<keyword id="KW-0333">Golgi apparatus</keyword>
<keyword id="KW-0472">Membrane</keyword>
<keyword id="KW-0597">Phosphoprotein</keyword>
<keyword id="KW-1267">Proteomics identification</keyword>
<keyword id="KW-1185">Reference proteome</keyword>
<keyword id="KW-0732">Signal</keyword>
<keyword id="KW-0812">Transmembrane</keyword>
<keyword id="KW-1133">Transmembrane helix</keyword>
<feature type="signal peptide" evidence="1">
    <location>
        <begin position="1"/>
        <end position="42"/>
    </location>
</feature>
<feature type="chain" id="PRO_0000291753" description="Transmembrane protein 87B">
    <location>
        <begin position="43"/>
        <end position="555"/>
    </location>
</feature>
<feature type="topological domain" description="Lumenal" evidence="5">
    <location>
        <begin position="43"/>
        <end position="214"/>
    </location>
</feature>
<feature type="transmembrane region" description="Helical; Name=1" evidence="1">
    <location>
        <begin position="215"/>
        <end position="235"/>
    </location>
</feature>
<feature type="topological domain" description="Cytoplasmic" evidence="5">
    <location>
        <begin position="236"/>
        <end position="247"/>
    </location>
</feature>
<feature type="transmembrane region" description="Helical; Name=2" evidence="1">
    <location>
        <begin position="248"/>
        <end position="268"/>
    </location>
</feature>
<feature type="topological domain" description="Lumenal" evidence="5">
    <location>
        <begin position="269"/>
        <end position="299"/>
    </location>
</feature>
<feature type="transmembrane region" description="Helical; Name=3" evidence="1">
    <location>
        <begin position="300"/>
        <end position="320"/>
    </location>
</feature>
<feature type="topological domain" description="Cytoplasmic" evidence="5">
    <location>
        <begin position="321"/>
        <end position="322"/>
    </location>
</feature>
<feature type="transmembrane region" description="Helical; Name=4" evidence="1">
    <location>
        <begin position="323"/>
        <end position="343"/>
    </location>
</feature>
<feature type="topological domain" description="Lumenal" evidence="5">
    <location>
        <begin position="344"/>
        <end position="350"/>
    </location>
</feature>
<feature type="transmembrane region" description="Helical; Name=5" evidence="1">
    <location>
        <begin position="351"/>
        <end position="371"/>
    </location>
</feature>
<feature type="topological domain" description="Cytoplasmic" evidence="5">
    <location>
        <begin position="372"/>
        <end position="396"/>
    </location>
</feature>
<feature type="transmembrane region" description="Helical; Name=6" evidence="1">
    <location>
        <begin position="397"/>
        <end position="417"/>
    </location>
</feature>
<feature type="topological domain" description="Lumenal" evidence="5">
    <location>
        <begin position="418"/>
        <end position="429"/>
    </location>
</feature>
<feature type="transmembrane region" description="Helical; Name=7" evidence="1">
    <location>
        <begin position="430"/>
        <end position="450"/>
    </location>
</feature>
<feature type="topological domain" description="Cytoplasmic" evidence="5">
    <location>
        <begin position="451"/>
        <end position="555"/>
    </location>
</feature>
<feature type="modified residue" description="Phosphoserine" evidence="8">
    <location>
        <position position="469"/>
    </location>
</feature>
<feature type="modified residue" description="Phosphoserine" evidence="10">
    <location>
        <position position="494"/>
    </location>
</feature>
<feature type="modified residue" description="Phosphoserine" evidence="10">
    <location>
        <position position="496"/>
    </location>
</feature>
<feature type="modified residue" description="Phosphoserine" evidence="9 10 11">
    <location>
        <position position="534"/>
    </location>
</feature>
<feature type="glycosylation site" description="N-linked (GlcNAc...) asparagine" evidence="1">
    <location>
        <position position="68"/>
    </location>
</feature>
<feature type="glycosylation site" description="N-linked (GlcNAc...) asparagine" evidence="1">
    <location>
        <position position="197"/>
    </location>
</feature>
<feature type="glycosylation site" description="N-linked (GlcNAc...) asparagine" evidence="1">
    <location>
        <position position="272"/>
    </location>
</feature>
<feature type="splice variant" id="VSP_026219" description="In isoform 2." evidence="4">
    <location>
        <position position="167"/>
    </location>
</feature>
<feature type="sequence variant" id="VAR_078997" description="Found in restrictive cardiomyopathy; uncertain significance; dbSNP:rs369634007." evidence="3">
    <original>N</original>
    <variation>D</variation>
    <location>
        <position position="456"/>
    </location>
</feature>
<sequence length="555" mass="63536">MVAACRSVAGLLPRRRRCFPARAPLLRVALCLLCWTPAAVRAVPELGLWLETVNDKSGPLIFRKTMFNSTDIKLSVKSFHCSGPVKFTIVWHLKYHTCHNEHSNLEELFQKHKLSVDEDFCHYLKNDNCWTTKNENLDCNSDSQVFPSLNNKELINIRNVSNQERSMDVVARTQKDGFHIFIVSIKTENTDASWNLNVSLSMIGPHGYISASDWPLMIFYMVMCIVYILYGILWLTWSACYWKDILRIQFWIAAVIFLGMLEKAVFYSEYQNISNTGLSTQGLLIFAELISAIKRTLARLLVIIVSLGYGIVKPRLGTVMHRVIGLGLLYLIFAAVEGVMRVIGGSNHLAVVLDDIILAVIDSIFVWFIFISLAQTMKTLRLRKNTVKFSLYRHFKNTLIFAVLASIVFMGWTTKTFRIAKCQSDWMERWVDDAFWSFLFSLILIVIMFLWRPSANNQRYAFMPLIDDSDDEIEEFMVTSENLTEGIKLRASKSVSNGTAKPATSENFDEDLKWVEENIPSSFTDVALPVLVDSDEEIMTRSEMAEKMFSSEKIM</sequence>
<name>TM87B_HUMAN</name>
<proteinExistence type="evidence at protein level"/>
<protein>
    <recommendedName>
        <fullName evidence="5">Transmembrane protein 87B</fullName>
    </recommendedName>
</protein>
<reference key="1">
    <citation type="journal article" date="2004" name="Nat. Genet.">
        <title>Complete sequencing and characterization of 21,243 full-length human cDNAs.</title>
        <authorList>
            <person name="Ota T."/>
            <person name="Suzuki Y."/>
            <person name="Nishikawa T."/>
            <person name="Otsuki T."/>
            <person name="Sugiyama T."/>
            <person name="Irie R."/>
            <person name="Wakamatsu A."/>
            <person name="Hayashi K."/>
            <person name="Sato H."/>
            <person name="Nagai K."/>
            <person name="Kimura K."/>
            <person name="Makita H."/>
            <person name="Sekine M."/>
            <person name="Obayashi M."/>
            <person name="Nishi T."/>
            <person name="Shibahara T."/>
            <person name="Tanaka T."/>
            <person name="Ishii S."/>
            <person name="Yamamoto J."/>
            <person name="Saito K."/>
            <person name="Kawai Y."/>
            <person name="Isono Y."/>
            <person name="Nakamura Y."/>
            <person name="Nagahari K."/>
            <person name="Murakami K."/>
            <person name="Yasuda T."/>
            <person name="Iwayanagi T."/>
            <person name="Wagatsuma M."/>
            <person name="Shiratori A."/>
            <person name="Sudo H."/>
            <person name="Hosoiri T."/>
            <person name="Kaku Y."/>
            <person name="Kodaira H."/>
            <person name="Kondo H."/>
            <person name="Sugawara M."/>
            <person name="Takahashi M."/>
            <person name="Kanda K."/>
            <person name="Yokoi T."/>
            <person name="Furuya T."/>
            <person name="Kikkawa E."/>
            <person name="Omura Y."/>
            <person name="Abe K."/>
            <person name="Kamihara K."/>
            <person name="Katsuta N."/>
            <person name="Sato K."/>
            <person name="Tanikawa M."/>
            <person name="Yamazaki M."/>
            <person name="Ninomiya K."/>
            <person name="Ishibashi T."/>
            <person name="Yamashita H."/>
            <person name="Murakawa K."/>
            <person name="Fujimori K."/>
            <person name="Tanai H."/>
            <person name="Kimata M."/>
            <person name="Watanabe M."/>
            <person name="Hiraoka S."/>
            <person name="Chiba Y."/>
            <person name="Ishida S."/>
            <person name="Ono Y."/>
            <person name="Takiguchi S."/>
            <person name="Watanabe S."/>
            <person name="Yosida M."/>
            <person name="Hotuta T."/>
            <person name="Kusano J."/>
            <person name="Kanehori K."/>
            <person name="Takahashi-Fujii A."/>
            <person name="Hara H."/>
            <person name="Tanase T.-O."/>
            <person name="Nomura Y."/>
            <person name="Togiya S."/>
            <person name="Komai F."/>
            <person name="Hara R."/>
            <person name="Takeuchi K."/>
            <person name="Arita M."/>
            <person name="Imose N."/>
            <person name="Musashino K."/>
            <person name="Yuuki H."/>
            <person name="Oshima A."/>
            <person name="Sasaki N."/>
            <person name="Aotsuka S."/>
            <person name="Yoshikawa Y."/>
            <person name="Matsunawa H."/>
            <person name="Ichihara T."/>
            <person name="Shiohata N."/>
            <person name="Sano S."/>
            <person name="Moriya S."/>
            <person name="Momiyama H."/>
            <person name="Satoh N."/>
            <person name="Takami S."/>
            <person name="Terashima Y."/>
            <person name="Suzuki O."/>
            <person name="Nakagawa S."/>
            <person name="Senoh A."/>
            <person name="Mizoguchi H."/>
            <person name="Goto Y."/>
            <person name="Shimizu F."/>
            <person name="Wakebe H."/>
            <person name="Hishigaki H."/>
            <person name="Watanabe T."/>
            <person name="Sugiyama A."/>
            <person name="Takemoto M."/>
            <person name="Kawakami B."/>
            <person name="Yamazaki M."/>
            <person name="Watanabe K."/>
            <person name="Kumagai A."/>
            <person name="Itakura S."/>
            <person name="Fukuzumi Y."/>
            <person name="Fujimori Y."/>
            <person name="Komiyama M."/>
            <person name="Tashiro H."/>
            <person name="Tanigami A."/>
            <person name="Fujiwara T."/>
            <person name="Ono T."/>
            <person name="Yamada K."/>
            <person name="Fujii Y."/>
            <person name="Ozaki K."/>
            <person name="Hirao M."/>
            <person name="Ohmori Y."/>
            <person name="Kawabata A."/>
            <person name="Hikiji T."/>
            <person name="Kobatake N."/>
            <person name="Inagaki H."/>
            <person name="Ikema Y."/>
            <person name="Okamoto S."/>
            <person name="Okitani R."/>
            <person name="Kawakami T."/>
            <person name="Noguchi S."/>
            <person name="Itoh T."/>
            <person name="Shigeta K."/>
            <person name="Senba T."/>
            <person name="Matsumura K."/>
            <person name="Nakajima Y."/>
            <person name="Mizuno T."/>
            <person name="Morinaga M."/>
            <person name="Sasaki M."/>
            <person name="Togashi T."/>
            <person name="Oyama M."/>
            <person name="Hata H."/>
            <person name="Watanabe M."/>
            <person name="Komatsu T."/>
            <person name="Mizushima-Sugano J."/>
            <person name="Satoh T."/>
            <person name="Shirai Y."/>
            <person name="Takahashi Y."/>
            <person name="Nakagawa K."/>
            <person name="Okumura K."/>
            <person name="Nagase T."/>
            <person name="Nomura N."/>
            <person name="Kikuchi H."/>
            <person name="Masuho Y."/>
            <person name="Yamashita R."/>
            <person name="Nakai K."/>
            <person name="Yada T."/>
            <person name="Nakamura Y."/>
            <person name="Ohara O."/>
            <person name="Isogai T."/>
            <person name="Sugano S."/>
        </authorList>
    </citation>
    <scope>NUCLEOTIDE SEQUENCE [LARGE SCALE MRNA] (ISOFORM 1)</scope>
    <source>
        <tissue>Teratocarcinoma</tissue>
        <tissue>Tongue</tissue>
    </source>
</reference>
<reference key="2">
    <citation type="journal article" date="2005" name="Nature">
        <title>Generation and annotation of the DNA sequences of human chromosomes 2 and 4.</title>
        <authorList>
            <person name="Hillier L.W."/>
            <person name="Graves T.A."/>
            <person name="Fulton R.S."/>
            <person name="Fulton L.A."/>
            <person name="Pepin K.H."/>
            <person name="Minx P."/>
            <person name="Wagner-McPherson C."/>
            <person name="Layman D."/>
            <person name="Wylie K."/>
            <person name="Sekhon M."/>
            <person name="Becker M.C."/>
            <person name="Fewell G.A."/>
            <person name="Delehaunty K.D."/>
            <person name="Miner T.L."/>
            <person name="Nash W.E."/>
            <person name="Kremitzki C."/>
            <person name="Oddy L."/>
            <person name="Du H."/>
            <person name="Sun H."/>
            <person name="Bradshaw-Cordum H."/>
            <person name="Ali J."/>
            <person name="Carter J."/>
            <person name="Cordes M."/>
            <person name="Harris A."/>
            <person name="Isak A."/>
            <person name="van Brunt A."/>
            <person name="Nguyen C."/>
            <person name="Du F."/>
            <person name="Courtney L."/>
            <person name="Kalicki J."/>
            <person name="Ozersky P."/>
            <person name="Abbott S."/>
            <person name="Armstrong J."/>
            <person name="Belter E.A."/>
            <person name="Caruso L."/>
            <person name="Cedroni M."/>
            <person name="Cotton M."/>
            <person name="Davidson T."/>
            <person name="Desai A."/>
            <person name="Elliott G."/>
            <person name="Erb T."/>
            <person name="Fronick C."/>
            <person name="Gaige T."/>
            <person name="Haakenson W."/>
            <person name="Haglund K."/>
            <person name="Holmes A."/>
            <person name="Harkins R."/>
            <person name="Kim K."/>
            <person name="Kruchowski S.S."/>
            <person name="Strong C.M."/>
            <person name="Grewal N."/>
            <person name="Goyea E."/>
            <person name="Hou S."/>
            <person name="Levy A."/>
            <person name="Martinka S."/>
            <person name="Mead K."/>
            <person name="McLellan M.D."/>
            <person name="Meyer R."/>
            <person name="Randall-Maher J."/>
            <person name="Tomlinson C."/>
            <person name="Dauphin-Kohlberg S."/>
            <person name="Kozlowicz-Reilly A."/>
            <person name="Shah N."/>
            <person name="Swearengen-Shahid S."/>
            <person name="Snider J."/>
            <person name="Strong J.T."/>
            <person name="Thompson J."/>
            <person name="Yoakum M."/>
            <person name="Leonard S."/>
            <person name="Pearman C."/>
            <person name="Trani L."/>
            <person name="Radionenko M."/>
            <person name="Waligorski J.E."/>
            <person name="Wang C."/>
            <person name="Rock S.M."/>
            <person name="Tin-Wollam A.-M."/>
            <person name="Maupin R."/>
            <person name="Latreille P."/>
            <person name="Wendl M.C."/>
            <person name="Yang S.-P."/>
            <person name="Pohl C."/>
            <person name="Wallis J.W."/>
            <person name="Spieth J."/>
            <person name="Bieri T.A."/>
            <person name="Berkowicz N."/>
            <person name="Nelson J.O."/>
            <person name="Osborne J."/>
            <person name="Ding L."/>
            <person name="Meyer R."/>
            <person name="Sabo A."/>
            <person name="Shotland Y."/>
            <person name="Sinha P."/>
            <person name="Wohldmann P.E."/>
            <person name="Cook L.L."/>
            <person name="Hickenbotham M.T."/>
            <person name="Eldred J."/>
            <person name="Williams D."/>
            <person name="Jones T.A."/>
            <person name="She X."/>
            <person name="Ciccarelli F.D."/>
            <person name="Izaurralde E."/>
            <person name="Taylor J."/>
            <person name="Schmutz J."/>
            <person name="Myers R.M."/>
            <person name="Cox D.R."/>
            <person name="Huang X."/>
            <person name="McPherson J.D."/>
            <person name="Mardis E.R."/>
            <person name="Clifton S.W."/>
            <person name="Warren W.C."/>
            <person name="Chinwalla A.T."/>
            <person name="Eddy S.R."/>
            <person name="Marra M.A."/>
            <person name="Ovcharenko I."/>
            <person name="Furey T.S."/>
            <person name="Miller W."/>
            <person name="Eichler E.E."/>
            <person name="Bork P."/>
            <person name="Suyama M."/>
            <person name="Torrents D."/>
            <person name="Waterston R.H."/>
            <person name="Wilson R.K."/>
        </authorList>
    </citation>
    <scope>NUCLEOTIDE SEQUENCE [LARGE SCALE GENOMIC DNA]</scope>
</reference>
<reference key="3">
    <citation type="journal article" date="2004" name="Genome Res.">
        <title>The status, quality, and expansion of the NIH full-length cDNA project: the Mammalian Gene Collection (MGC).</title>
        <authorList>
            <consortium name="The MGC Project Team"/>
        </authorList>
    </citation>
    <scope>NUCLEOTIDE SEQUENCE [LARGE SCALE MRNA] (ISOFORM 2)</scope>
</reference>
<reference key="4">
    <citation type="journal article" date="2009" name="Sci. Signal.">
        <title>Quantitative phosphoproteomic analysis of T cell receptor signaling reveals system-wide modulation of protein-protein interactions.</title>
        <authorList>
            <person name="Mayya V."/>
            <person name="Lundgren D.H."/>
            <person name="Hwang S.-I."/>
            <person name="Rezaul K."/>
            <person name="Wu L."/>
            <person name="Eng J.K."/>
            <person name="Rodionov V."/>
            <person name="Han D.K."/>
        </authorList>
    </citation>
    <scope>PHOSPHORYLATION [LARGE SCALE ANALYSIS] AT SER-469</scope>
    <scope>IDENTIFICATION BY MASS SPECTROMETRY [LARGE SCALE ANALYSIS]</scope>
    <source>
        <tissue>Leukemic T-cell</tissue>
    </source>
</reference>
<reference key="5">
    <citation type="journal article" date="2010" name="Sci. Signal.">
        <title>Quantitative phosphoproteomics reveals widespread full phosphorylation site occupancy during mitosis.</title>
        <authorList>
            <person name="Olsen J.V."/>
            <person name="Vermeulen M."/>
            <person name="Santamaria A."/>
            <person name="Kumar C."/>
            <person name="Miller M.L."/>
            <person name="Jensen L.J."/>
            <person name="Gnad F."/>
            <person name="Cox J."/>
            <person name="Jensen T.S."/>
            <person name="Nigg E.A."/>
            <person name="Brunak S."/>
            <person name="Mann M."/>
        </authorList>
    </citation>
    <scope>PHOSPHORYLATION [LARGE SCALE ANALYSIS] AT SER-534</scope>
    <scope>IDENTIFICATION BY MASS SPECTROMETRY [LARGE SCALE ANALYSIS]</scope>
    <source>
        <tissue>Cervix carcinoma</tissue>
    </source>
</reference>
<reference key="6">
    <citation type="journal article" date="2011" name="Sci. Signal.">
        <title>System-wide temporal characterization of the proteome and phosphoproteome of human embryonic stem cell differentiation.</title>
        <authorList>
            <person name="Rigbolt K.T."/>
            <person name="Prokhorova T.A."/>
            <person name="Akimov V."/>
            <person name="Henningsen J."/>
            <person name="Johansen P.T."/>
            <person name="Kratchmarova I."/>
            <person name="Kassem M."/>
            <person name="Mann M."/>
            <person name="Olsen J.V."/>
            <person name="Blagoev B."/>
        </authorList>
    </citation>
    <scope>PHOSPHORYLATION [LARGE SCALE ANALYSIS] AT SER-494; SER-496 AND SER-534</scope>
    <scope>IDENTIFICATION BY MASS SPECTROMETRY [LARGE SCALE ANALYSIS]</scope>
</reference>
<reference key="7">
    <citation type="journal article" date="2013" name="J. Proteome Res.">
        <title>Toward a comprehensive characterization of a human cancer cell phosphoproteome.</title>
        <authorList>
            <person name="Zhou H."/>
            <person name="Di Palma S."/>
            <person name="Preisinger C."/>
            <person name="Peng M."/>
            <person name="Polat A.N."/>
            <person name="Heck A.J."/>
            <person name="Mohammed S."/>
        </authorList>
    </citation>
    <scope>IDENTIFICATION BY MASS SPECTROMETRY [LARGE SCALE ANALYSIS]</scope>
    <source>
        <tissue>Erythroleukemia</tissue>
    </source>
</reference>
<reference key="8">
    <citation type="journal article" date="2014" name="J. Proteomics">
        <title>An enzyme assisted RP-RPLC approach for in-depth analysis of human liver phosphoproteome.</title>
        <authorList>
            <person name="Bian Y."/>
            <person name="Song C."/>
            <person name="Cheng K."/>
            <person name="Dong M."/>
            <person name="Wang F."/>
            <person name="Huang J."/>
            <person name="Sun D."/>
            <person name="Wang L."/>
            <person name="Ye M."/>
            <person name="Zou H."/>
        </authorList>
    </citation>
    <scope>PHOSPHORYLATION [LARGE SCALE ANALYSIS] AT SER-534</scope>
    <scope>IDENTIFICATION BY MASS SPECTROMETRY [LARGE SCALE ANALYSIS]</scope>
    <source>
        <tissue>Liver</tissue>
    </source>
</reference>
<reference key="9">
    <citation type="journal article" date="2015" name="Mol. Biol. Cell">
        <title>Post-Golgi anterograde transport requires GARP-dependent endosome-to-TGN retrograde transport.</title>
        <authorList>
            <person name="Hirata T."/>
            <person name="Fujita M."/>
            <person name="Nakamura S."/>
            <person name="Gotoh K."/>
            <person name="Motooka D."/>
            <person name="Murakami Y."/>
            <person name="Maeda Y."/>
            <person name="Kinoshita T."/>
        </authorList>
    </citation>
    <scope>FUNCTION</scope>
</reference>
<reference key="10">
    <citation type="journal article" date="2016" name="Cold Spring Harb. Mol. Case Stud.">
        <title>Discovery of a potentially deleterious variant in TMEM87B in a patient with a hemizygous 2q13 microdeletion suggests a recessive condition characterized by congenital heart disease and restrictive cardiomyopathy.</title>
        <authorList>
            <person name="Yu H.C."/>
            <person name="Coughlin C.R."/>
            <person name="Geiger E.A."/>
            <person name="Salvador B.J."/>
            <person name="Elias E.R."/>
            <person name="Cavanaugh J.L."/>
            <person name="Chatfield K.C."/>
            <person name="Miyamoto S.D."/>
            <person name="Shaikh T.H."/>
        </authorList>
    </citation>
    <scope>VARIANT ASP-456</scope>
</reference>
<comment type="function">
    <text evidence="2">May be involved in retrograde transport from endosomes to the trans-Golgi network (TGN).</text>
</comment>
<comment type="subcellular location">
    <subcellularLocation>
        <location evidence="6">Golgi apparatus membrane</location>
        <topology evidence="1">Multi-pass membrane protein</topology>
    </subcellularLocation>
</comment>
<comment type="alternative products">
    <event type="alternative splicing"/>
    <isoform>
        <id>Q96K49-1</id>
        <name>1</name>
        <sequence type="displayed"/>
    </isoform>
    <isoform>
        <id>Q96K49-2</id>
        <name>2</name>
        <sequence type="described" ref="VSP_026219"/>
    </isoform>
</comment>
<comment type="disease">
    <text evidence="3">TMEM87B mutations may be involved in restrictive cardiomyopathy (RCM), a rare non-ischemic myocardial disease. RCM is characterized by restrictive ventricular-filling physiology in the presence of normal or reduced diastolic and/or systolic volumes (of 1 or both ventricles), biatrial enlargement, and normal ventricular wall thickness.</text>
</comment>
<comment type="similarity">
    <text evidence="5">Belongs to the LU7TM family. TMEM87 subfamily.</text>
</comment>
<dbReference type="EMBL" id="AK027587">
    <property type="protein sequence ID" value="BAB55214.1"/>
    <property type="molecule type" value="mRNA"/>
</dbReference>
<dbReference type="EMBL" id="AK290294">
    <property type="protein sequence ID" value="BAF82983.1"/>
    <property type="molecule type" value="mRNA"/>
</dbReference>
<dbReference type="EMBL" id="AC092645">
    <property type="status" value="NOT_ANNOTATED_CDS"/>
    <property type="molecule type" value="Genomic_DNA"/>
</dbReference>
<dbReference type="EMBL" id="AC093675">
    <property type="protein sequence ID" value="AAY24214.1"/>
    <property type="molecule type" value="Genomic_DNA"/>
</dbReference>
<dbReference type="EMBL" id="BC115373">
    <property type="protein sequence ID" value="AAI15374.1"/>
    <property type="molecule type" value="mRNA"/>
</dbReference>
<dbReference type="CCDS" id="CCDS33275.1">
    <molecule id="Q96K49-1"/>
</dbReference>
<dbReference type="RefSeq" id="NP_116213.1">
    <molecule id="Q96K49-1"/>
    <property type="nucleotide sequence ID" value="NM_032824.3"/>
</dbReference>
<dbReference type="RefSeq" id="XP_005263884.1">
    <molecule id="Q96K49-2"/>
    <property type="nucleotide sequence ID" value="XM_005263827.3"/>
</dbReference>
<dbReference type="RefSeq" id="XP_054200221.1">
    <molecule id="Q96K49-2"/>
    <property type="nucleotide sequence ID" value="XM_054344246.1"/>
</dbReference>
<dbReference type="SMR" id="Q96K49"/>
<dbReference type="BioGRID" id="124347">
    <property type="interactions" value="25"/>
</dbReference>
<dbReference type="FunCoup" id="Q96K49">
    <property type="interactions" value="2817"/>
</dbReference>
<dbReference type="IntAct" id="Q96K49">
    <property type="interactions" value="13"/>
</dbReference>
<dbReference type="MINT" id="Q96K49"/>
<dbReference type="STRING" id="9606.ENSP00000283206"/>
<dbReference type="TCDB" id="9.A.14.22.5">
    <property type="family name" value="the g-protein-coupled receptor (gpcr) family"/>
</dbReference>
<dbReference type="GlyConnect" id="1855">
    <property type="glycosylation" value="1 N-Linked glycan (1 site)"/>
</dbReference>
<dbReference type="GlyCosmos" id="Q96K49">
    <property type="glycosylation" value="3 sites, 1 glycan"/>
</dbReference>
<dbReference type="GlyGen" id="Q96K49">
    <property type="glycosylation" value="6 sites, 8 N-linked glycans (1 site), 1 O-linked glycan (1 site)"/>
</dbReference>
<dbReference type="iPTMnet" id="Q96K49"/>
<dbReference type="PhosphoSitePlus" id="Q96K49"/>
<dbReference type="SwissPalm" id="Q96K49"/>
<dbReference type="BioMuta" id="TMEM87B"/>
<dbReference type="DMDM" id="74732185"/>
<dbReference type="jPOST" id="Q96K49"/>
<dbReference type="MassIVE" id="Q96K49"/>
<dbReference type="PaxDb" id="9606-ENSP00000283206"/>
<dbReference type="PeptideAtlas" id="Q96K49"/>
<dbReference type="ProteomicsDB" id="77041">
    <molecule id="Q96K49-1"/>
</dbReference>
<dbReference type="ProteomicsDB" id="77042">
    <molecule id="Q96K49-2"/>
</dbReference>
<dbReference type="Antibodypedia" id="33259">
    <property type="antibodies" value="64 antibodies from 15 providers"/>
</dbReference>
<dbReference type="DNASU" id="84910"/>
<dbReference type="Ensembl" id="ENST00000283206.9">
    <molecule id="Q96K49-1"/>
    <property type="protein sequence ID" value="ENSP00000283206.4"/>
    <property type="gene ID" value="ENSG00000153214.11"/>
</dbReference>
<dbReference type="GeneID" id="84910"/>
<dbReference type="KEGG" id="hsa:84910"/>
<dbReference type="MANE-Select" id="ENST00000283206.9">
    <property type="protein sequence ID" value="ENSP00000283206.4"/>
    <property type="RefSeq nucleotide sequence ID" value="NM_032824.3"/>
    <property type="RefSeq protein sequence ID" value="NP_116213.1"/>
</dbReference>
<dbReference type="UCSC" id="uc002thm.2">
    <molecule id="Q96K49-1"/>
    <property type="organism name" value="human"/>
</dbReference>
<dbReference type="AGR" id="HGNC:25913"/>
<dbReference type="CTD" id="84910"/>
<dbReference type="DisGeNET" id="84910"/>
<dbReference type="GeneCards" id="TMEM87B"/>
<dbReference type="HGNC" id="HGNC:25913">
    <property type="gene designation" value="TMEM87B"/>
</dbReference>
<dbReference type="HPA" id="ENSG00000153214">
    <property type="expression patterns" value="Low tissue specificity"/>
</dbReference>
<dbReference type="MIM" id="617203">
    <property type="type" value="gene"/>
</dbReference>
<dbReference type="neXtProt" id="NX_Q96K49"/>
<dbReference type="OpenTargets" id="ENSG00000153214"/>
<dbReference type="Orphanet" id="684742">
    <property type="disease" value="2q13 microdeletion syndrome"/>
</dbReference>
<dbReference type="PharmGKB" id="PA142670740"/>
<dbReference type="VEuPathDB" id="HostDB:ENSG00000153214"/>
<dbReference type="eggNOG" id="KOG2568">
    <property type="taxonomic scope" value="Eukaryota"/>
</dbReference>
<dbReference type="GeneTree" id="ENSGT00940000156844"/>
<dbReference type="HOGENOM" id="CLU_027525_1_1_1"/>
<dbReference type="InParanoid" id="Q96K49"/>
<dbReference type="OMA" id="RTENCTP"/>
<dbReference type="OrthoDB" id="19932at2759"/>
<dbReference type="PAN-GO" id="Q96K49">
    <property type="GO annotations" value="3 GO annotations based on evolutionary models"/>
</dbReference>
<dbReference type="PhylomeDB" id="Q96K49"/>
<dbReference type="TreeFam" id="TF314452"/>
<dbReference type="PathwayCommons" id="Q96K49"/>
<dbReference type="SignaLink" id="Q96K49"/>
<dbReference type="BioGRID-ORCS" id="84910">
    <property type="hits" value="16 hits in 1169 CRISPR screens"/>
</dbReference>
<dbReference type="ChiTaRS" id="TMEM87B">
    <property type="organism name" value="human"/>
</dbReference>
<dbReference type="GenomeRNAi" id="84910"/>
<dbReference type="Pharos" id="Q96K49">
    <property type="development level" value="Tdark"/>
</dbReference>
<dbReference type="PRO" id="PR:Q96K49"/>
<dbReference type="Proteomes" id="UP000005640">
    <property type="component" value="Chromosome 2"/>
</dbReference>
<dbReference type="RNAct" id="Q96K49">
    <property type="molecule type" value="protein"/>
</dbReference>
<dbReference type="Bgee" id="ENSG00000153214">
    <property type="expression patterns" value="Expressed in mucosa of sigmoid colon and 171 other cell types or tissues"/>
</dbReference>
<dbReference type="ExpressionAtlas" id="Q96K49">
    <property type="expression patterns" value="baseline and differential"/>
</dbReference>
<dbReference type="GO" id="GO:0005829">
    <property type="term" value="C:cytosol"/>
    <property type="evidence" value="ECO:0007669"/>
    <property type="project" value="GOC"/>
</dbReference>
<dbReference type="GO" id="GO:0005794">
    <property type="term" value="C:Golgi apparatus"/>
    <property type="evidence" value="ECO:0000318"/>
    <property type="project" value="GO_Central"/>
</dbReference>
<dbReference type="GO" id="GO:0032580">
    <property type="term" value="C:Golgi cisterna membrane"/>
    <property type="evidence" value="ECO:0000318"/>
    <property type="project" value="GO_Central"/>
</dbReference>
<dbReference type="GO" id="GO:0000139">
    <property type="term" value="C:Golgi membrane"/>
    <property type="evidence" value="ECO:0007669"/>
    <property type="project" value="UniProtKB-SubCell"/>
</dbReference>
<dbReference type="GO" id="GO:0042147">
    <property type="term" value="P:retrograde transport, endosome to Golgi"/>
    <property type="evidence" value="ECO:0000316"/>
    <property type="project" value="UniProtKB"/>
</dbReference>
<dbReference type="InterPro" id="IPR053937">
    <property type="entry name" value="GOST_TM"/>
</dbReference>
<dbReference type="InterPro" id="IPR009637">
    <property type="entry name" value="GPR107/GPR108-like"/>
</dbReference>
<dbReference type="InterPro" id="IPR054101">
    <property type="entry name" value="TMEM87A/B_GOLD"/>
</dbReference>
<dbReference type="PANTHER" id="PTHR21229">
    <property type="entry name" value="LUNG SEVEN TRANSMEMBRANE RECEPTOR"/>
    <property type="match status" value="1"/>
</dbReference>
<dbReference type="PANTHER" id="PTHR21229:SF16">
    <property type="entry name" value="TRANSMEMBRANE PROTEIN 87B"/>
    <property type="match status" value="1"/>
</dbReference>
<dbReference type="Pfam" id="PF06814">
    <property type="entry name" value="GOST_TM"/>
    <property type="match status" value="1"/>
</dbReference>
<dbReference type="Pfam" id="PF21901">
    <property type="entry name" value="TMEM87A-B_GOLD"/>
    <property type="match status" value="1"/>
</dbReference>
<evidence type="ECO:0000255" key="1"/>
<evidence type="ECO:0000269" key="2">
    <source>
    </source>
</evidence>
<evidence type="ECO:0000269" key="3">
    <source>
    </source>
</evidence>
<evidence type="ECO:0000303" key="4">
    <source>
    </source>
</evidence>
<evidence type="ECO:0000305" key="5"/>
<evidence type="ECO:0000305" key="6">
    <source>
    </source>
</evidence>
<evidence type="ECO:0000312" key="7">
    <source>
        <dbReference type="HGNC" id="HGNC:25913"/>
    </source>
</evidence>
<evidence type="ECO:0007744" key="8">
    <source>
    </source>
</evidence>
<evidence type="ECO:0007744" key="9">
    <source>
    </source>
</evidence>
<evidence type="ECO:0007744" key="10">
    <source>
    </source>
</evidence>
<evidence type="ECO:0007744" key="11">
    <source>
    </source>
</evidence>
<organism>
    <name type="scientific">Homo sapiens</name>
    <name type="common">Human</name>
    <dbReference type="NCBI Taxonomy" id="9606"/>
    <lineage>
        <taxon>Eukaryota</taxon>
        <taxon>Metazoa</taxon>
        <taxon>Chordata</taxon>
        <taxon>Craniata</taxon>
        <taxon>Vertebrata</taxon>
        <taxon>Euteleostomi</taxon>
        <taxon>Mammalia</taxon>
        <taxon>Eutheria</taxon>
        <taxon>Euarchontoglires</taxon>
        <taxon>Primates</taxon>
        <taxon>Haplorrhini</taxon>
        <taxon>Catarrhini</taxon>
        <taxon>Hominidae</taxon>
        <taxon>Homo</taxon>
    </lineage>
</organism>